<organism>
    <name type="scientific">Pyrococcus abyssi (strain GE5 / Orsay)</name>
    <dbReference type="NCBI Taxonomy" id="272844"/>
    <lineage>
        <taxon>Archaea</taxon>
        <taxon>Methanobacteriati</taxon>
        <taxon>Methanobacteriota</taxon>
        <taxon>Thermococci</taxon>
        <taxon>Thermococcales</taxon>
        <taxon>Thermococcaceae</taxon>
        <taxon>Pyrococcus</taxon>
    </lineage>
</organism>
<evidence type="ECO:0000255" key="1">
    <source>
        <dbReference type="HAMAP-Rule" id="MF_00329"/>
    </source>
</evidence>
<evidence type="ECO:0000305" key="2"/>
<keyword id="KW-0687">Ribonucleoprotein</keyword>
<keyword id="KW-0689">Ribosomal protein</keyword>
<reference key="1">
    <citation type="journal article" date="2003" name="Mol. Microbiol.">
        <title>An integrated analysis of the genome of the hyperthermophilic archaeon Pyrococcus abyssi.</title>
        <authorList>
            <person name="Cohen G.N."/>
            <person name="Barbe V."/>
            <person name="Flament D."/>
            <person name="Galperin M."/>
            <person name="Heilig R."/>
            <person name="Lecompte O."/>
            <person name="Poch O."/>
            <person name="Prieur D."/>
            <person name="Querellou J."/>
            <person name="Ripp R."/>
            <person name="Thierry J.-C."/>
            <person name="Van der Oost J."/>
            <person name="Weissenbach J."/>
            <person name="Zivanovic Y."/>
            <person name="Forterre P."/>
        </authorList>
    </citation>
    <scope>NUCLEOTIDE SEQUENCE [LARGE SCALE GENOMIC DNA]</scope>
    <source>
        <strain>GE5 / Orsay</strain>
    </source>
</reference>
<reference key="2">
    <citation type="journal article" date="2012" name="Curr. Microbiol.">
        <title>Re-annotation of two hyperthermophilic archaea Pyrococcus abyssi GE5 and Pyrococcus furiosus DSM 3638.</title>
        <authorList>
            <person name="Gao J."/>
            <person name="Wang J."/>
        </authorList>
    </citation>
    <scope>GENOME REANNOTATION</scope>
    <source>
        <strain>GE5 / Orsay</strain>
    </source>
</reference>
<name>RL18E_PYRAB</name>
<sequence length="120" mass="13810">MKRTGPTDPNLRRLIRYLRKKSNEEKVKIWKDIAWRLERPRRQRAEVNVSRINRYAKDGDMIVVPGSVLGAGKIEKKVIVAAWKFSETARRKIEEAGGEAITIEELIKRNPKGSGVIIME</sequence>
<accession>Q9V197</accession>
<accession>G8ZGP1</accession>
<dbReference type="EMBL" id="AJ248284">
    <property type="protein sequence ID" value="CAB49453.1"/>
    <property type="molecule type" value="Genomic_DNA"/>
</dbReference>
<dbReference type="EMBL" id="HE613800">
    <property type="protein sequence ID" value="CCE69920.1"/>
    <property type="molecule type" value="Genomic_DNA"/>
</dbReference>
<dbReference type="PIR" id="F75171">
    <property type="entry name" value="F75171"/>
</dbReference>
<dbReference type="RefSeq" id="WP_010867655.1">
    <property type="nucleotide sequence ID" value="NC_000868.1"/>
</dbReference>
<dbReference type="SMR" id="Q9V197"/>
<dbReference type="STRING" id="272844.PAB0364"/>
<dbReference type="KEGG" id="pab:PAB0364"/>
<dbReference type="PATRIC" id="fig|272844.11.peg.566"/>
<dbReference type="eggNOG" id="arCOG00780">
    <property type="taxonomic scope" value="Archaea"/>
</dbReference>
<dbReference type="HOGENOM" id="CLU_146465_0_0_2"/>
<dbReference type="OrthoDB" id="11309at2157"/>
<dbReference type="PhylomeDB" id="Q9V197"/>
<dbReference type="Proteomes" id="UP000000810">
    <property type="component" value="Chromosome"/>
</dbReference>
<dbReference type="Proteomes" id="UP000009139">
    <property type="component" value="Chromosome"/>
</dbReference>
<dbReference type="GO" id="GO:0022625">
    <property type="term" value="C:cytosolic large ribosomal subunit"/>
    <property type="evidence" value="ECO:0007669"/>
    <property type="project" value="TreeGrafter"/>
</dbReference>
<dbReference type="GO" id="GO:0003723">
    <property type="term" value="F:RNA binding"/>
    <property type="evidence" value="ECO:0007669"/>
    <property type="project" value="TreeGrafter"/>
</dbReference>
<dbReference type="GO" id="GO:0003735">
    <property type="term" value="F:structural constituent of ribosome"/>
    <property type="evidence" value="ECO:0007669"/>
    <property type="project" value="InterPro"/>
</dbReference>
<dbReference type="GO" id="GO:0006412">
    <property type="term" value="P:translation"/>
    <property type="evidence" value="ECO:0007669"/>
    <property type="project" value="UniProtKB-UniRule"/>
</dbReference>
<dbReference type="FunFam" id="3.100.10.10:FF:000013">
    <property type="entry name" value="50S ribosomal protein L18e"/>
    <property type="match status" value="1"/>
</dbReference>
<dbReference type="Gene3D" id="3.100.10.10">
    <property type="match status" value="1"/>
</dbReference>
<dbReference type="HAMAP" id="MF_00329">
    <property type="entry name" value="Ribosomal_eL18"/>
    <property type="match status" value="1"/>
</dbReference>
<dbReference type="InterPro" id="IPR000039">
    <property type="entry name" value="Ribosomal_eL18"/>
</dbReference>
<dbReference type="InterPro" id="IPR021132">
    <property type="entry name" value="Ribosomal_eL18/eL18-A/B/_CS"/>
</dbReference>
<dbReference type="InterPro" id="IPR022947">
    <property type="entry name" value="Ribosomal_eL18_arc"/>
</dbReference>
<dbReference type="InterPro" id="IPR021131">
    <property type="entry name" value="Ribosomal_uL15/eL18"/>
</dbReference>
<dbReference type="InterPro" id="IPR036227">
    <property type="entry name" value="Ribosomal_uL15/eL18_sf"/>
</dbReference>
<dbReference type="NCBIfam" id="NF003079">
    <property type="entry name" value="PRK04005.1"/>
    <property type="match status" value="1"/>
</dbReference>
<dbReference type="PANTHER" id="PTHR10934">
    <property type="entry name" value="60S RIBOSOMAL PROTEIN L18"/>
    <property type="match status" value="1"/>
</dbReference>
<dbReference type="PANTHER" id="PTHR10934:SF2">
    <property type="entry name" value="LARGE RIBOSOMAL SUBUNIT PROTEIN EL18"/>
    <property type="match status" value="1"/>
</dbReference>
<dbReference type="Pfam" id="PF17135">
    <property type="entry name" value="Ribosomal_L18"/>
    <property type="match status" value="1"/>
</dbReference>
<dbReference type="SUPFAM" id="SSF52080">
    <property type="entry name" value="Ribosomal proteins L15p and L18e"/>
    <property type="match status" value="1"/>
</dbReference>
<dbReference type="PROSITE" id="PS01106">
    <property type="entry name" value="RIBOSOMAL_L18E"/>
    <property type="match status" value="1"/>
</dbReference>
<protein>
    <recommendedName>
        <fullName evidence="1">Large ribosomal subunit protein eL18</fullName>
    </recommendedName>
    <alternativeName>
        <fullName evidence="2">50S ribosomal protein L18e</fullName>
    </alternativeName>
</protein>
<comment type="similarity">
    <text evidence="1">Belongs to the eukaryotic ribosomal protein eL18 family.</text>
</comment>
<gene>
    <name evidence="1" type="primary">rpl18e</name>
    <name type="ordered locus">PYRAB05310</name>
    <name type="ORF">PAB0364</name>
</gene>
<proteinExistence type="inferred from homology"/>
<feature type="chain" id="PRO_0000132797" description="Large ribosomal subunit protein eL18">
    <location>
        <begin position="1"/>
        <end position="120"/>
    </location>
</feature>